<accession>Q26789</accession>
<accession>Q26790</accession>
<name>PFR2_TRYBB</name>
<comment type="function">
    <text>Major component of the paraflagellar rod (PFR). The PFR is a highly ordered lattices of fibrous proteins that are located inside the flagellum and assume a fixed orientation with respect to the microtubular axoneme.</text>
</comment>
<comment type="subunit">
    <text>Heterodimer of a 69 kDa and a 73 kDa protein.</text>
</comment>
<comment type="subcellular location">
    <subcellularLocation>
        <location>Cell projection</location>
        <location>Cilium</location>
        <location>Flagellum</location>
    </subcellularLocation>
    <subcellularLocation>
        <location>Cytoplasm</location>
        <location>Cytoskeleton</location>
    </subcellularLocation>
</comment>
<comment type="miscellaneous">
    <text>Coded by two tandemly repeated genes with almost identical ORF: PFRC and PFRD.</text>
</comment>
<organism>
    <name type="scientific">Trypanosoma brucei brucei</name>
    <dbReference type="NCBI Taxonomy" id="5702"/>
    <lineage>
        <taxon>Eukaryota</taxon>
        <taxon>Discoba</taxon>
        <taxon>Euglenozoa</taxon>
        <taxon>Kinetoplastea</taxon>
        <taxon>Metakinetoplastina</taxon>
        <taxon>Trypanosomatida</taxon>
        <taxon>Trypanosomatidae</taxon>
        <taxon>Trypanosoma</taxon>
    </lineage>
</organism>
<reference key="1">
    <citation type="journal article" date="1994" name="J. Biol. Chem.">
        <title>The major components of the paraflagellar rod of Trypanosoma brucei are two similar, but distinct proteins which are encoded by two different gene loci.</title>
        <authorList>
            <person name="Deflorin J."/>
            <person name="Rudolf M."/>
            <person name="Seebeck T."/>
        </authorList>
    </citation>
    <scope>NUCLEOTIDE SEQUENCE [GENOMIC DNA]</scope>
    <source>
        <strain>STIB 366</strain>
    </source>
</reference>
<evidence type="ECO:0000255" key="1"/>
<evidence type="ECO:0000256" key="2">
    <source>
        <dbReference type="SAM" id="MobiDB-lite"/>
    </source>
</evidence>
<sequence length="595" mass="69742">MAAVDDATGLEAARKQKIHNLKLKTACLENEELVQELHVSDWSETQRQKLRGAHLKAEELVAAVDVGTKWNLTEVYDLAKLMRVCGLEMSQRELYRPEDKAQFMDIIAMKKVLQDLRQNRNKTRVVSFTQMIDNAIAKVEKVEEDVRRSQLDATQLAQVPTQTLKQVEDIMNVTQIQNALASTDDQIKTQLAHVEKTNEIQNVAMHDGEMQVAEEQMWTKVQLQERLIDLIQDKFRLISKCEEENQAFSKIHEVQKQANQETSQMKDAKRRLKQRCETDLKHIHDAIQKADLEDAEATKRHAANKEKSDRYIRENEDRQEETWNKIQDLERQLQKLGTERFDEVKRRIEEIDREEKRRVEYSQFLEVASQHKKLLELTVYNCDLAIRCTGLVEELVSEGCAAVKARHDKTSQDLAALRLDVHKEHLEYFRMLYLTLGSLIYKKEKRMEEIDRNIRTTHIQLEFCVETFDPNAKKHADMKKELYRLRQGVEEELAMLKEKQAKALEEFKESEEVSGRCWHRVQPPCDENNEEVLTRRSKMVEYRSHLTKQEEVKIAAEREEIKRALTAQLWCRWRAGPHRKQHCTHASNSVAAIIM</sequence>
<feature type="chain" id="PRO_0000058347" description="73 kDa paraflagellar rod protein">
    <location>
        <begin position="1"/>
        <end position="595"/>
    </location>
</feature>
<feature type="region of interest" description="Disordered" evidence="2">
    <location>
        <begin position="294"/>
        <end position="317"/>
    </location>
</feature>
<feature type="region of interest" description="Calmodulin-binding" evidence="1">
    <location>
        <begin position="317"/>
        <end position="337"/>
    </location>
</feature>
<feature type="sequence variant" description="In PFRD.">
    <original>DV</original>
    <variation>EL</variation>
    <location>
        <begin position="145"/>
        <end position="146"/>
    </location>
</feature>
<keyword id="KW-0112">Calmodulin-binding</keyword>
<keyword id="KW-0966">Cell projection</keyword>
<keyword id="KW-0969">Cilium</keyword>
<keyword id="KW-0963">Cytoplasm</keyword>
<keyword id="KW-0206">Cytoskeleton</keyword>
<keyword id="KW-0282">Flagellum</keyword>
<gene>
    <name type="primary">PFRC</name>
</gene>
<gene>
    <name type="primary">PFRD</name>
</gene>
<protein>
    <recommendedName>
        <fullName>73 kDa paraflagellar rod protein</fullName>
        <shortName>73 kDa PFR protein</shortName>
    </recommendedName>
    <alternativeName>
        <fullName>PFR-C/PFR-D</fullName>
    </alternativeName>
</protein>
<dbReference type="EMBL" id="Z25827">
    <property type="protein sequence ID" value="CAA81068.1"/>
    <property type="molecule type" value="Genomic_DNA"/>
</dbReference>
<dbReference type="EMBL" id="Z25827">
    <property type="protein sequence ID" value="CAA81069.1"/>
    <property type="molecule type" value="Genomic_DNA"/>
</dbReference>
<dbReference type="PIR" id="S37057">
    <property type="entry name" value="S37057"/>
</dbReference>
<dbReference type="SMR" id="Q26789"/>
<dbReference type="ABCD" id="Q26789">
    <property type="antibodies" value="1 sequenced antibody"/>
</dbReference>
<dbReference type="GO" id="GO:0005737">
    <property type="term" value="C:cytoplasm"/>
    <property type="evidence" value="ECO:0007669"/>
    <property type="project" value="UniProtKB-KW"/>
</dbReference>
<dbReference type="GO" id="GO:0005856">
    <property type="term" value="C:cytoskeleton"/>
    <property type="evidence" value="ECO:0007669"/>
    <property type="project" value="UniProtKB-SubCell"/>
</dbReference>
<dbReference type="GO" id="GO:0031514">
    <property type="term" value="C:motile cilium"/>
    <property type="evidence" value="ECO:0007669"/>
    <property type="project" value="UniProtKB-SubCell"/>
</dbReference>
<dbReference type="GO" id="GO:0005516">
    <property type="term" value="F:calmodulin binding"/>
    <property type="evidence" value="ECO:0007669"/>
    <property type="project" value="UniProtKB-KW"/>
</dbReference>
<dbReference type="InterPro" id="IPR007824">
    <property type="entry name" value="Flagellar_rod"/>
</dbReference>
<dbReference type="InterPro" id="IPR053120">
    <property type="entry name" value="PFR_Component"/>
</dbReference>
<dbReference type="PANTHER" id="PTHR34732">
    <property type="entry name" value="69 KDA PARAFLAGELLAR ROD PROTEIN-RELATED"/>
    <property type="match status" value="1"/>
</dbReference>
<dbReference type="PANTHER" id="PTHR34732:SF2">
    <property type="entry name" value="73 KDA PARAFLAGELLAR ROD PROTEIN"/>
    <property type="match status" value="1"/>
</dbReference>
<dbReference type="Pfam" id="PF05149">
    <property type="entry name" value="Flagellar_rod"/>
    <property type="match status" value="1"/>
</dbReference>
<proteinExistence type="predicted"/>